<organism>
    <name type="scientific">African swine fever virus (strain Badajoz 1971 Vero-adapted)</name>
    <name type="common">Ba71V</name>
    <name type="synonym">ASFV</name>
    <dbReference type="NCBI Taxonomy" id="10498"/>
    <lineage>
        <taxon>Viruses</taxon>
        <taxon>Varidnaviria</taxon>
        <taxon>Bamfordvirae</taxon>
        <taxon>Nucleocytoviricota</taxon>
        <taxon>Pokkesviricetes</taxon>
        <taxon>Asfuvirales</taxon>
        <taxon>Asfarviridae</taxon>
        <taxon>Asfivirus</taxon>
        <taxon>African swine fever virus</taxon>
    </lineage>
</organism>
<organismHost>
    <name type="scientific">Ornithodoros</name>
    <name type="common">relapsing fever ticks</name>
    <dbReference type="NCBI Taxonomy" id="6937"/>
</organismHost>
<organismHost>
    <name type="scientific">Sus scrofa</name>
    <name type="common">Pig</name>
    <dbReference type="NCBI Taxonomy" id="9823"/>
</organismHost>
<evidence type="ECO:0000269" key="1">
    <source>
    </source>
</evidence>
<evidence type="ECO:0000269" key="2">
    <source>
    </source>
</evidence>
<evidence type="ECO:0000269" key="3">
    <source>
    </source>
</evidence>
<evidence type="ECO:0000269" key="4">
    <source>
    </source>
</evidence>
<evidence type="ECO:0000305" key="5"/>
<comment type="function">
    <text evidence="2 3">Interacts with the host phosphatase PP1 catalytic subunit (PPP1CB) and recruits it to dephosphorylate EIF2S1/eIF2alpha and therefore restores the host translation that has been shut-down by the host. Also inhibits the EIF2S1/eIF2alpha-ATF4-DDIT3/CHOP pathway.</text>
</comment>
<comment type="subunit">
    <text evidence="1">Interacts (via C-terminus) with host PPP1CB.</text>
</comment>
<comment type="induction">
    <text evidence="4">Expressed in the late phase of the viral replicative cycle.</text>
</comment>
<comment type="similarity">
    <text evidence="5">Belongs to the asfivirus DP71L family.</text>
</comment>
<name>DP71L_ASFB7</name>
<reference key="1">
    <citation type="journal article" date="1995" name="Virology">
        <title>Analysis of the complete nucleotide sequence of African swine fever virus.</title>
        <authorList>
            <person name="Yanez R.J."/>
            <person name="Rodriguez J.M."/>
            <person name="Nogal M.L."/>
            <person name="Yuste L."/>
            <person name="Enriquez C."/>
            <person name="Rodriguez J.F."/>
            <person name="Vinuela E."/>
        </authorList>
    </citation>
    <scope>NUCLEOTIDE SEQUENCE [LARGE SCALE GENOMIC DNA]</scope>
</reference>
<reference key="2">
    <citation type="journal article" date="2007" name="J. Virol.">
        <title>The MyD116 African swine fever virus homologue interacts with the catalytic subunit of protein phosphatase 1 and activates its phosphatase activity.</title>
        <authorList>
            <person name="Rivera J."/>
            <person name="Abrams C."/>
            <person name="Hernaez B."/>
            <person name="Alcazar A."/>
            <person name="Escribano J.M."/>
            <person name="Dixon L."/>
            <person name="Alonso C."/>
        </authorList>
    </citation>
    <scope>INTERACTION WITH HOST PPP1CB</scope>
</reference>
<reference key="3">
    <citation type="journal article" date="2010" name="J. Virol.">
        <title>The African swine fever virus DP71L protein recruits the protein phosphatase 1 catalytic subunit to dephosphorylate eIF2alpha and inhibits CHOP induction but is dispensable for these activities during virus infection.</title>
        <authorList>
            <person name="Zhang F."/>
            <person name="Moon A."/>
            <person name="Childs K."/>
            <person name="Goodbourn S."/>
            <person name="Dixon L.K."/>
        </authorList>
    </citation>
    <scope>FUNCTION</scope>
</reference>
<reference key="4">
    <citation type="journal article" date="2017" name="Virology">
        <title>Identification of residues within the African swine fever virus DP71L protein required for dephosphorylation of translation initiation factor eIF2alpha and inhibiting activation of pro-apoptotic CHOP.</title>
        <authorList>
            <person name="Barber C."/>
            <person name="Netherton C."/>
            <person name="Goatley L."/>
            <person name="Moon A."/>
            <person name="Goodbourn S."/>
            <person name="Dixon L."/>
        </authorList>
    </citation>
    <scope>FUNCTION</scope>
    <scope>MUTAGENESIS OF VAL-16; PHE-18; LEU-57 AND LEU-61</scope>
</reference>
<reference key="5">
    <citation type="journal article" date="2020" name="J. Virol.">
        <title>The African Swine Fever Virus Transcriptome.</title>
        <authorList>
            <person name="Cackett G."/>
            <person name="Matelska D."/>
            <person name="Sykora M."/>
            <person name="Portugal R."/>
            <person name="Malecki M."/>
            <person name="Baehler J."/>
            <person name="Dixon L."/>
            <person name="Werner F."/>
        </authorList>
    </citation>
    <scope>INDUCTION</scope>
</reference>
<keyword id="KW-0945">Host-virus interaction</keyword>
<keyword id="KW-1090">Inhibition of host innate immune response by virus</keyword>
<keyword id="KW-1114">Inhibition of host interferon signaling pathway by virus</keyword>
<keyword id="KW-0922">Interferon antiviral system evasion</keyword>
<keyword id="KW-0426">Late protein</keyword>
<keyword id="KW-1126">Modulation of host PP1 activity by virus</keyword>
<keyword id="KW-1185">Reference proteome</keyword>
<keyword id="KW-0899">Viral immunoevasion</keyword>
<gene>
    <name type="ordered locus">Ba71V-154</name>
    <name type="ORF">DP71L</name>
</gene>
<dbReference type="EMBL" id="U18466">
    <property type="protein sequence ID" value="AAA65380.1"/>
    <property type="molecule type" value="Genomic_DNA"/>
</dbReference>
<dbReference type="RefSeq" id="NP_042844.1">
    <property type="nucleotide sequence ID" value="NC_001659.2"/>
</dbReference>
<dbReference type="SMR" id="Q65212"/>
<dbReference type="GeneID" id="22220380"/>
<dbReference type="KEGG" id="vg:22220380"/>
<dbReference type="Proteomes" id="UP000000624">
    <property type="component" value="Segment"/>
</dbReference>
<dbReference type="GO" id="GO:0004865">
    <property type="term" value="F:protein serine/threonine phosphatase inhibitor activity"/>
    <property type="evidence" value="ECO:0007669"/>
    <property type="project" value="UniProtKB-KW"/>
</dbReference>
<dbReference type="GO" id="GO:0060255">
    <property type="term" value="P:regulation of macromolecule metabolic process"/>
    <property type="evidence" value="ECO:0007669"/>
    <property type="project" value="UniProtKB-ARBA"/>
</dbReference>
<dbReference type="GO" id="GO:0080090">
    <property type="term" value="P:regulation of primary metabolic process"/>
    <property type="evidence" value="ECO:0007669"/>
    <property type="project" value="UniProtKB-ARBA"/>
</dbReference>
<dbReference type="GO" id="GO:0034976">
    <property type="term" value="P:response to endoplasmic reticulum stress"/>
    <property type="evidence" value="ECO:0007669"/>
    <property type="project" value="TreeGrafter"/>
</dbReference>
<dbReference type="GO" id="GO:0052170">
    <property type="term" value="P:symbiont-mediated suppression of host innate immune response"/>
    <property type="evidence" value="ECO:0007669"/>
    <property type="project" value="UniProtKB-KW"/>
</dbReference>
<dbReference type="GO" id="GO:0039606">
    <property type="term" value="P:symbiont-mediated suppression of host translation initiation"/>
    <property type="evidence" value="ECO:0007669"/>
    <property type="project" value="UniProtKB-KW"/>
</dbReference>
<dbReference type="GO" id="GO:0039502">
    <property type="term" value="P:symbiont-mediated suppression of host type I interferon-mediated signaling pathway"/>
    <property type="evidence" value="ECO:0007669"/>
    <property type="project" value="UniProtKB-KW"/>
</dbReference>
<dbReference type="InterPro" id="IPR051254">
    <property type="entry name" value="PPP1R15"/>
</dbReference>
<dbReference type="InterPro" id="IPR019523">
    <property type="entry name" value="Prot_Pase1_reg-su15A/B_C"/>
</dbReference>
<dbReference type="PANTHER" id="PTHR16489">
    <property type="entry name" value="GH11727P"/>
    <property type="match status" value="1"/>
</dbReference>
<dbReference type="PANTHER" id="PTHR16489:SF12">
    <property type="entry name" value="GH11727P"/>
    <property type="match status" value="1"/>
</dbReference>
<dbReference type="Pfam" id="PF10488">
    <property type="entry name" value="PP1c_bdg"/>
    <property type="match status" value="1"/>
</dbReference>
<proteinExistence type="evidence at protein level"/>
<feature type="chain" id="PRO_0000379083" description="Protein DP71L">
    <location>
        <begin position="1"/>
        <end position="71"/>
    </location>
</feature>
<feature type="region of interest" description="Important for host CHOP inhibition" evidence="3">
    <location>
        <begin position="16"/>
        <end position="18"/>
    </location>
</feature>
<feature type="region of interest" description="Important for host CHOP inhibition" evidence="3">
    <location>
        <begin position="57"/>
        <end position="61"/>
    </location>
</feature>
<feature type="mutagenesis site" description="83% loss of host CHOP inhibition; when associated with L-18." evidence="3">
    <original>V</original>
    <variation>E</variation>
    <location>
        <position position="16"/>
    </location>
</feature>
<feature type="mutagenesis site" description="83% loss of host CHOP inhibition;when associated with E-16." evidence="3">
    <original>F</original>
    <variation>L</variation>
    <location>
        <position position="18"/>
    </location>
</feature>
<feature type="mutagenesis site" description="69% loss of host CHOP inhibition." evidence="3">
    <original>L</original>
    <variation>A</variation>
    <location>
        <position position="57"/>
    </location>
</feature>
<feature type="mutagenesis site" description="43% loss of host CHOP inhibition." evidence="3">
    <original>L</original>
    <variation>A</variation>
    <location>
        <position position="61"/>
    </location>
</feature>
<accession>Q65212</accession>
<accession>O12410</accession>
<accession>O12411</accession>
<accession>O12412</accession>
<accession>O12413</accession>
<accession>O12414</accession>
<accession>O12415</accession>
<accession>O12706</accession>
<accession>O12707</accession>
<accession>O12708</accession>
<accession>O12709</accession>
<accession>O12710</accession>
<accession>O12711</accession>
<protein>
    <recommendedName>
        <fullName>Protein DP71L</fullName>
    </recommendedName>
    <alternativeName>
        <fullName>MyD116 homolog</fullName>
    </alternativeName>
</protein>
<sequence>MGGRRRKKRTNDTKHVRFAAAVEVWEADDIERKGPWEQVAVDRFRFQRRIASVEELLSTVLLRQKKLLEQQ</sequence>